<dbReference type="EMBL" id="X79489">
    <property type="protein sequence ID" value="CAA56000.1"/>
    <property type="molecule type" value="Genomic_DNA"/>
</dbReference>
<dbReference type="EMBL" id="Z35861">
    <property type="protein sequence ID" value="CAA84923.1"/>
    <property type="molecule type" value="Genomic_DNA"/>
</dbReference>
<dbReference type="EMBL" id="AY693358">
    <property type="protein sequence ID" value="AAT93377.1"/>
    <property type="molecule type" value="Genomic_DNA"/>
</dbReference>
<dbReference type="PIR" id="S45400">
    <property type="entry name" value="S45400"/>
</dbReference>
<dbReference type="DIP" id="DIP-5675N"/>
<dbReference type="PaxDb" id="4932-YBL100C"/>
<dbReference type="EnsemblFungi" id="YBL100C_mRNA">
    <property type="protein sequence ID" value="YBL100C"/>
    <property type="gene ID" value="YBL100C"/>
</dbReference>
<dbReference type="AGR" id="SGD:S000000196"/>
<dbReference type="SGD" id="S000000196">
    <property type="gene designation" value="YBL100C"/>
</dbReference>
<dbReference type="HOGENOM" id="CLU_2308253_0_0_1"/>
<dbReference type="GO" id="GO:0005789">
    <property type="term" value="C:endoplasmic reticulum membrane"/>
    <property type="evidence" value="ECO:0000314"/>
    <property type="project" value="SGD"/>
</dbReference>
<proteinExistence type="uncertain"/>
<feature type="chain" id="PRO_0000202440" description="Putative uncharacterized protein YBL100C">
    <location>
        <begin position="1"/>
        <end position="104"/>
    </location>
</feature>
<feature type="transmembrane region" description="Helical" evidence="1">
    <location>
        <begin position="77"/>
        <end position="98"/>
    </location>
</feature>
<sequence>MLFKPKTRAIPSPTARTLPVSFKLASSDTPLILSSKMEETSVGCALVEANLLVEAKAAAAGLAALVELIRVLDRERIAAVRANIIICACFFYLFCYCSCDSYES</sequence>
<organism>
    <name type="scientific">Saccharomyces cerevisiae (strain ATCC 204508 / S288c)</name>
    <name type="common">Baker's yeast</name>
    <dbReference type="NCBI Taxonomy" id="559292"/>
    <lineage>
        <taxon>Eukaryota</taxon>
        <taxon>Fungi</taxon>
        <taxon>Dikarya</taxon>
        <taxon>Ascomycota</taxon>
        <taxon>Saccharomycotina</taxon>
        <taxon>Saccharomycetes</taxon>
        <taxon>Saccharomycetales</taxon>
        <taxon>Saccharomycetaceae</taxon>
        <taxon>Saccharomyces</taxon>
    </lineage>
</organism>
<gene>
    <name type="ordered locus">YBL100C</name>
    <name type="ORF">YBL0826</name>
</gene>
<reference key="1">
    <citation type="journal article" date="1995" name="Yeast">
        <title>Sequence analysis of a 78.6 kb segment of the left end of Saccharomyces cerevisiae chromosome II.</title>
        <authorList>
            <person name="Obermaier B."/>
            <person name="Gassenhuber J."/>
            <person name="Piravandi E."/>
            <person name="Domdey H."/>
        </authorList>
    </citation>
    <scope>NUCLEOTIDE SEQUENCE [GENOMIC DNA]</scope>
    <source>
        <strain>ATCC 204508 / S288c</strain>
    </source>
</reference>
<reference key="2">
    <citation type="journal article" date="1994" name="EMBO J.">
        <title>Complete DNA sequence of yeast chromosome II.</title>
        <authorList>
            <person name="Feldmann H."/>
            <person name="Aigle M."/>
            <person name="Aljinovic G."/>
            <person name="Andre B."/>
            <person name="Baclet M.C."/>
            <person name="Barthe C."/>
            <person name="Baur A."/>
            <person name="Becam A.-M."/>
            <person name="Biteau N."/>
            <person name="Boles E."/>
            <person name="Brandt T."/>
            <person name="Brendel M."/>
            <person name="Brueckner M."/>
            <person name="Bussereau F."/>
            <person name="Christiansen C."/>
            <person name="Contreras R."/>
            <person name="Crouzet M."/>
            <person name="Cziepluch C."/>
            <person name="Demolis N."/>
            <person name="Delaveau T."/>
            <person name="Doignon F."/>
            <person name="Domdey H."/>
            <person name="Duesterhus S."/>
            <person name="Dubois E."/>
            <person name="Dujon B."/>
            <person name="El Bakkoury M."/>
            <person name="Entian K.-D."/>
            <person name="Feuermann M."/>
            <person name="Fiers W."/>
            <person name="Fobo G.M."/>
            <person name="Fritz C."/>
            <person name="Gassenhuber J."/>
            <person name="Glansdorff N."/>
            <person name="Goffeau A."/>
            <person name="Grivell L.A."/>
            <person name="de Haan M."/>
            <person name="Hein C."/>
            <person name="Herbert C.J."/>
            <person name="Hollenberg C.P."/>
            <person name="Holmstroem K."/>
            <person name="Jacq C."/>
            <person name="Jacquet M."/>
            <person name="Jauniaux J.-C."/>
            <person name="Jonniaux J.-L."/>
            <person name="Kallesoee T."/>
            <person name="Kiesau P."/>
            <person name="Kirchrath L."/>
            <person name="Koetter P."/>
            <person name="Korol S."/>
            <person name="Liebl S."/>
            <person name="Logghe M."/>
            <person name="Lohan A.J.E."/>
            <person name="Louis E.J."/>
            <person name="Li Z.Y."/>
            <person name="Maat M.J."/>
            <person name="Mallet L."/>
            <person name="Mannhaupt G."/>
            <person name="Messenguy F."/>
            <person name="Miosga T."/>
            <person name="Molemans F."/>
            <person name="Mueller S."/>
            <person name="Nasr F."/>
            <person name="Obermaier B."/>
            <person name="Perea J."/>
            <person name="Pierard A."/>
            <person name="Piravandi E."/>
            <person name="Pohl F.M."/>
            <person name="Pohl T.M."/>
            <person name="Potier S."/>
            <person name="Proft M."/>
            <person name="Purnelle B."/>
            <person name="Ramezani Rad M."/>
            <person name="Rieger M."/>
            <person name="Rose M."/>
            <person name="Schaaff-Gerstenschlaeger I."/>
            <person name="Scherens B."/>
            <person name="Schwarzlose C."/>
            <person name="Skala J."/>
            <person name="Slonimski P.P."/>
            <person name="Smits P.H.M."/>
            <person name="Souciet J.-L."/>
            <person name="Steensma H.Y."/>
            <person name="Stucka R."/>
            <person name="Urrestarazu L.A."/>
            <person name="van der Aart Q.J.M."/>
            <person name="Van Dyck L."/>
            <person name="Vassarotti A."/>
            <person name="Vetter I."/>
            <person name="Vierendeels F."/>
            <person name="Vissers S."/>
            <person name="Wagner G."/>
            <person name="de Wergifosse P."/>
            <person name="Wolfe K.H."/>
            <person name="Zagulski M."/>
            <person name="Zimmermann F.K."/>
            <person name="Mewes H.-W."/>
            <person name="Kleine K."/>
        </authorList>
    </citation>
    <scope>NUCLEOTIDE SEQUENCE [LARGE SCALE GENOMIC DNA]</scope>
    <source>
        <strain>ATCC 204508 / S288c</strain>
    </source>
</reference>
<reference key="3">
    <citation type="journal article" date="2014" name="G3 (Bethesda)">
        <title>The reference genome sequence of Saccharomyces cerevisiae: Then and now.</title>
        <authorList>
            <person name="Engel S.R."/>
            <person name="Dietrich F.S."/>
            <person name="Fisk D.G."/>
            <person name="Binkley G."/>
            <person name="Balakrishnan R."/>
            <person name="Costanzo M.C."/>
            <person name="Dwight S.S."/>
            <person name="Hitz B.C."/>
            <person name="Karra K."/>
            <person name="Nash R.S."/>
            <person name="Weng S."/>
            <person name="Wong E.D."/>
            <person name="Lloyd P."/>
            <person name="Skrzypek M.S."/>
            <person name="Miyasato S.R."/>
            <person name="Simison M."/>
            <person name="Cherry J.M."/>
        </authorList>
    </citation>
    <scope>GENOME REANNOTATION</scope>
    <source>
        <strain>ATCC 204508 / S288c</strain>
    </source>
</reference>
<reference key="4">
    <citation type="journal article" date="2007" name="Genome Res.">
        <title>Approaching a complete repository of sequence-verified protein-encoding clones for Saccharomyces cerevisiae.</title>
        <authorList>
            <person name="Hu Y."/>
            <person name="Rolfs A."/>
            <person name="Bhullar B."/>
            <person name="Murthy T.V.S."/>
            <person name="Zhu C."/>
            <person name="Berger M.F."/>
            <person name="Camargo A.A."/>
            <person name="Kelley F."/>
            <person name="McCarron S."/>
            <person name="Jepson D."/>
            <person name="Richardson A."/>
            <person name="Raphael J."/>
            <person name="Moreira D."/>
            <person name="Taycher E."/>
            <person name="Zuo D."/>
            <person name="Mohr S."/>
            <person name="Kane M.F."/>
            <person name="Williamson J."/>
            <person name="Simpson A.J.G."/>
            <person name="Bulyk M.L."/>
            <person name="Harlow E."/>
            <person name="Marsischky G."/>
            <person name="Kolodner R.D."/>
            <person name="LaBaer J."/>
        </authorList>
    </citation>
    <scope>NUCLEOTIDE SEQUENCE [GENOMIC DNA]</scope>
    <source>
        <strain>ATCC 204508 / S288c</strain>
    </source>
</reference>
<comment type="subcellular location">
    <subcellularLocation>
        <location evidence="2">Membrane</location>
        <topology evidence="2">Single-pass membrane protein</topology>
    </subcellularLocation>
</comment>
<comment type="miscellaneous">
    <text evidence="2">Almost completely overlaps ATP1.</text>
</comment>
<comment type="caution">
    <text evidence="3">Product of a dubious gene prediction unlikely to encode a functional protein. Because of that it is not part of the S.cerevisiae S288c complete/reference proteome set.</text>
</comment>
<keyword id="KW-0472">Membrane</keyword>
<keyword id="KW-0812">Transmembrane</keyword>
<keyword id="KW-1133">Transmembrane helix</keyword>
<name>YBK0_YEAST</name>
<accession>P38168</accession>
<protein>
    <recommendedName>
        <fullName>Putative uncharacterized protein YBL100C</fullName>
    </recommendedName>
</protein>
<evidence type="ECO:0000255" key="1"/>
<evidence type="ECO:0000305" key="2"/>
<evidence type="ECO:0000305" key="3">
    <source>
    </source>
</evidence>